<sequence length="531" mass="59330">MTSLTTQTLIITIFLLTIPTSFASPPSLEDVFAQCVTDFKPSNPKSPIQNYIYTQRSPNFLTILNNYVRNLRYFNNMTRKPVAIVAAADVTHIQATITCAKKLGLQLRIRSGGHDYDGMSYLSTIDFVVLDMFNLRSINIDPKLDTAWVQSGATLGEIYYGVANKSNDLRGFPAGICPGLGAGGHFSGGGYGNMMRKYGLSIDNIIDAKIVDAKGRVLDRSSMGEDLFWALRGGGAASFCVVLAWKIKLVPVPAKVTVFNIETFGNTGSVNTTELVAKWQEIADKIDNDLFIRLTLGSSNKTVKASFMGMYLGNSSNLLEIMNAKFPELGLIKRECIEMKWIESVLFWLGIPPGTAPTTSMLNRIPQKQIYLKRKSDYVQKPISRTGLESIFKIMTENENVTMAFNPYGGRMSEIPSTETAFPHRAGNMFKIQYAANWFVPGEAVAKDCLSQTERLFEAMSPYVSKNPREAFLNYRDVDIGKSLNSTYEEGKVYGFKYFKDNFEKLVKIKSRVDPDNFFRYEQSIPVLSSH</sequence>
<keyword id="KW-0134">Cell wall</keyword>
<keyword id="KW-1015">Disulfide bond</keyword>
<keyword id="KW-0274">FAD</keyword>
<keyword id="KW-0285">Flavoprotein</keyword>
<keyword id="KW-0325">Glycoprotein</keyword>
<keyword id="KW-0547">Nucleotide-binding</keyword>
<keyword id="KW-0560">Oxidoreductase</keyword>
<keyword id="KW-1185">Reference proteome</keyword>
<keyword id="KW-0964">Secreted</keyword>
<keyword id="KW-0732">Signal</keyword>
<organism>
    <name type="scientific">Arabidopsis thaliana</name>
    <name type="common">Mouse-ear cress</name>
    <dbReference type="NCBI Taxonomy" id="3702"/>
    <lineage>
        <taxon>Eukaryota</taxon>
        <taxon>Viridiplantae</taxon>
        <taxon>Streptophyta</taxon>
        <taxon>Embryophyta</taxon>
        <taxon>Tracheophyta</taxon>
        <taxon>Spermatophyta</taxon>
        <taxon>Magnoliopsida</taxon>
        <taxon>eudicotyledons</taxon>
        <taxon>Gunneridae</taxon>
        <taxon>Pentapetalae</taxon>
        <taxon>rosids</taxon>
        <taxon>malvids</taxon>
        <taxon>Brassicales</taxon>
        <taxon>Brassicaceae</taxon>
        <taxon>Camelineae</taxon>
        <taxon>Arabidopsis</taxon>
    </lineage>
</organism>
<accession>Q9SA86</accession>
<evidence type="ECO:0000250" key="1">
    <source>
        <dbReference type="UniProtKB" id="O64743"/>
    </source>
</evidence>
<evidence type="ECO:0000255" key="2"/>
<evidence type="ECO:0000255" key="3">
    <source>
        <dbReference type="PROSITE-ProRule" id="PRU00498"/>
    </source>
</evidence>
<evidence type="ECO:0000255" key="4">
    <source>
        <dbReference type="PROSITE-ProRule" id="PRU00718"/>
    </source>
</evidence>
<evidence type="ECO:0000269" key="5">
    <source>
    </source>
</evidence>
<evidence type="ECO:0000303" key="6">
    <source>
    </source>
</evidence>
<evidence type="ECO:0000305" key="7"/>
<evidence type="ECO:0000312" key="8">
    <source>
        <dbReference type="Araport" id="AT1G30710"/>
    </source>
</evidence>
<evidence type="ECO:0000312" key="9">
    <source>
        <dbReference type="EMBL" id="AAD25758.1"/>
    </source>
</evidence>
<gene>
    <name evidence="8" type="ordered locus">At1g30710</name>
    <name evidence="9" type="ORF">T5I8.16</name>
</gene>
<dbReference type="EC" id="1.1.1.-" evidence="1"/>
<dbReference type="EMBL" id="AC007060">
    <property type="protein sequence ID" value="AAD25758.1"/>
    <property type="molecule type" value="Genomic_DNA"/>
</dbReference>
<dbReference type="EMBL" id="CP002684">
    <property type="protein sequence ID" value="AEE31263.1"/>
    <property type="molecule type" value="Genomic_DNA"/>
</dbReference>
<dbReference type="EMBL" id="BT033024">
    <property type="protein sequence ID" value="ACE62892.1"/>
    <property type="molecule type" value="mRNA"/>
</dbReference>
<dbReference type="PIR" id="F86432">
    <property type="entry name" value="F86432"/>
</dbReference>
<dbReference type="RefSeq" id="NP_174358.1">
    <property type="nucleotide sequence ID" value="NM_102807.4"/>
</dbReference>
<dbReference type="SMR" id="Q9SA86"/>
<dbReference type="FunCoup" id="Q9SA86">
    <property type="interactions" value="51"/>
</dbReference>
<dbReference type="STRING" id="3702.Q9SA86"/>
<dbReference type="GlyGen" id="Q9SA86">
    <property type="glycosylation" value="7 sites"/>
</dbReference>
<dbReference type="PaxDb" id="3702-AT1G30710.1"/>
<dbReference type="ProteomicsDB" id="241128"/>
<dbReference type="EnsemblPlants" id="AT1G30710.1">
    <property type="protein sequence ID" value="AT1G30710.1"/>
    <property type="gene ID" value="AT1G30710"/>
</dbReference>
<dbReference type="GeneID" id="839951"/>
<dbReference type="Gramene" id="AT1G30710.1">
    <property type="protein sequence ID" value="AT1G30710.1"/>
    <property type="gene ID" value="AT1G30710"/>
</dbReference>
<dbReference type="KEGG" id="ath:AT1G30710"/>
<dbReference type="Araport" id="AT1G30710"/>
<dbReference type="TAIR" id="AT1G30710">
    <property type="gene designation" value="ATBBE9"/>
</dbReference>
<dbReference type="eggNOG" id="ENOG502QVGN">
    <property type="taxonomic scope" value="Eukaryota"/>
</dbReference>
<dbReference type="HOGENOM" id="CLU_018354_6_0_1"/>
<dbReference type="InParanoid" id="Q9SA86"/>
<dbReference type="OMA" id="KCNGHSY"/>
<dbReference type="OrthoDB" id="407275at2759"/>
<dbReference type="PhylomeDB" id="Q9SA86"/>
<dbReference type="BioCyc" id="ARA:AT1G30710-MONOMER"/>
<dbReference type="PRO" id="PR:Q9SA86"/>
<dbReference type="Proteomes" id="UP000006548">
    <property type="component" value="Chromosome 1"/>
</dbReference>
<dbReference type="ExpressionAtlas" id="Q9SA86">
    <property type="expression patterns" value="baseline and differential"/>
</dbReference>
<dbReference type="GO" id="GO:0005576">
    <property type="term" value="C:extracellular region"/>
    <property type="evidence" value="ECO:0007669"/>
    <property type="project" value="UniProtKB-KW"/>
</dbReference>
<dbReference type="GO" id="GO:0009505">
    <property type="term" value="C:plant-type cell wall"/>
    <property type="evidence" value="ECO:0000314"/>
    <property type="project" value="UniProtKB"/>
</dbReference>
<dbReference type="GO" id="GO:0071949">
    <property type="term" value="F:FAD binding"/>
    <property type="evidence" value="ECO:0007669"/>
    <property type="project" value="InterPro"/>
</dbReference>
<dbReference type="GO" id="GO:0016491">
    <property type="term" value="F:oxidoreductase activity"/>
    <property type="evidence" value="ECO:0007669"/>
    <property type="project" value="UniProtKB-KW"/>
</dbReference>
<dbReference type="FunFam" id="3.30.43.10:FF:000004">
    <property type="entry name" value="Berberine bridge enzyme-like 15"/>
    <property type="match status" value="1"/>
</dbReference>
<dbReference type="Gene3D" id="3.30.465.10">
    <property type="match status" value="1"/>
</dbReference>
<dbReference type="Gene3D" id="3.40.462.20">
    <property type="match status" value="1"/>
</dbReference>
<dbReference type="Gene3D" id="3.30.43.10">
    <property type="entry name" value="Uridine Diphospho-n-acetylenolpyruvylglucosamine Reductase, domain 2"/>
    <property type="match status" value="1"/>
</dbReference>
<dbReference type="InterPro" id="IPR012951">
    <property type="entry name" value="BBE"/>
</dbReference>
<dbReference type="InterPro" id="IPR016166">
    <property type="entry name" value="FAD-bd_PCMH"/>
</dbReference>
<dbReference type="InterPro" id="IPR036318">
    <property type="entry name" value="FAD-bd_PCMH-like_sf"/>
</dbReference>
<dbReference type="InterPro" id="IPR016167">
    <property type="entry name" value="FAD-bd_PCMH_sub1"/>
</dbReference>
<dbReference type="InterPro" id="IPR016169">
    <property type="entry name" value="FAD-bd_PCMH_sub2"/>
</dbReference>
<dbReference type="InterPro" id="IPR006094">
    <property type="entry name" value="Oxid_FAD_bind_N"/>
</dbReference>
<dbReference type="PANTHER" id="PTHR32448">
    <property type="entry name" value="OS08G0158400 PROTEIN"/>
    <property type="match status" value="1"/>
</dbReference>
<dbReference type="Pfam" id="PF08031">
    <property type="entry name" value="BBE"/>
    <property type="match status" value="1"/>
</dbReference>
<dbReference type="Pfam" id="PF01565">
    <property type="entry name" value="FAD_binding_4"/>
    <property type="match status" value="1"/>
</dbReference>
<dbReference type="SUPFAM" id="SSF56176">
    <property type="entry name" value="FAD-binding/transporter-associated domain-like"/>
    <property type="match status" value="1"/>
</dbReference>
<dbReference type="PROSITE" id="PS51387">
    <property type="entry name" value="FAD_PCMH"/>
    <property type="match status" value="1"/>
</dbReference>
<reference key="1">
    <citation type="journal article" date="2000" name="Nature">
        <title>Sequence and analysis of chromosome 1 of the plant Arabidopsis thaliana.</title>
        <authorList>
            <person name="Theologis A."/>
            <person name="Ecker J.R."/>
            <person name="Palm C.J."/>
            <person name="Federspiel N.A."/>
            <person name="Kaul S."/>
            <person name="White O."/>
            <person name="Alonso J."/>
            <person name="Altafi H."/>
            <person name="Araujo R."/>
            <person name="Bowman C.L."/>
            <person name="Brooks S.Y."/>
            <person name="Buehler E."/>
            <person name="Chan A."/>
            <person name="Chao Q."/>
            <person name="Chen H."/>
            <person name="Cheuk R.F."/>
            <person name="Chin C.W."/>
            <person name="Chung M.K."/>
            <person name="Conn L."/>
            <person name="Conway A.B."/>
            <person name="Conway A.R."/>
            <person name="Creasy T.H."/>
            <person name="Dewar K."/>
            <person name="Dunn P."/>
            <person name="Etgu P."/>
            <person name="Feldblyum T.V."/>
            <person name="Feng J.-D."/>
            <person name="Fong B."/>
            <person name="Fujii C.Y."/>
            <person name="Gill J.E."/>
            <person name="Goldsmith A.D."/>
            <person name="Haas B."/>
            <person name="Hansen N.F."/>
            <person name="Hughes B."/>
            <person name="Huizar L."/>
            <person name="Hunter J.L."/>
            <person name="Jenkins J."/>
            <person name="Johnson-Hopson C."/>
            <person name="Khan S."/>
            <person name="Khaykin E."/>
            <person name="Kim C.J."/>
            <person name="Koo H.L."/>
            <person name="Kremenetskaia I."/>
            <person name="Kurtz D.B."/>
            <person name="Kwan A."/>
            <person name="Lam B."/>
            <person name="Langin-Hooper S."/>
            <person name="Lee A."/>
            <person name="Lee J.M."/>
            <person name="Lenz C.A."/>
            <person name="Li J.H."/>
            <person name="Li Y.-P."/>
            <person name="Lin X."/>
            <person name="Liu S.X."/>
            <person name="Liu Z.A."/>
            <person name="Luros J.S."/>
            <person name="Maiti R."/>
            <person name="Marziali A."/>
            <person name="Militscher J."/>
            <person name="Miranda M."/>
            <person name="Nguyen M."/>
            <person name="Nierman W.C."/>
            <person name="Osborne B.I."/>
            <person name="Pai G."/>
            <person name="Peterson J."/>
            <person name="Pham P.K."/>
            <person name="Rizzo M."/>
            <person name="Rooney T."/>
            <person name="Rowley D."/>
            <person name="Sakano H."/>
            <person name="Salzberg S.L."/>
            <person name="Schwartz J.R."/>
            <person name="Shinn P."/>
            <person name="Southwick A.M."/>
            <person name="Sun H."/>
            <person name="Tallon L.J."/>
            <person name="Tambunga G."/>
            <person name="Toriumi M.J."/>
            <person name="Town C.D."/>
            <person name="Utterback T."/>
            <person name="Van Aken S."/>
            <person name="Vaysberg M."/>
            <person name="Vysotskaia V.S."/>
            <person name="Walker M."/>
            <person name="Wu D."/>
            <person name="Yu G."/>
            <person name="Fraser C.M."/>
            <person name="Venter J.C."/>
            <person name="Davis R.W."/>
        </authorList>
    </citation>
    <scope>NUCLEOTIDE SEQUENCE [LARGE SCALE GENOMIC DNA]</scope>
    <source>
        <strain>cv. Columbia</strain>
    </source>
</reference>
<reference key="2">
    <citation type="journal article" date="2017" name="Plant J.">
        <title>Araport11: a complete reannotation of the Arabidopsis thaliana reference genome.</title>
        <authorList>
            <person name="Cheng C.Y."/>
            <person name="Krishnakumar V."/>
            <person name="Chan A.P."/>
            <person name="Thibaud-Nissen F."/>
            <person name="Schobel S."/>
            <person name="Town C.D."/>
        </authorList>
    </citation>
    <scope>GENOME REANNOTATION</scope>
    <source>
        <strain>cv. Columbia</strain>
    </source>
</reference>
<reference key="3">
    <citation type="submission" date="2008-06" db="EMBL/GenBank/DDBJ databases">
        <title>Arabidopsis ORF clones.</title>
        <authorList>
            <person name="de los Reyes C."/>
            <person name="Quan R."/>
            <person name="Chen H."/>
            <person name="Bautista V."/>
            <person name="Kim C.J."/>
            <person name="Ecker J.R."/>
        </authorList>
    </citation>
    <scope>NUCLEOTIDE SEQUENCE [LARGE SCALE MRNA]</scope>
    <source>
        <strain>cv. Columbia</strain>
    </source>
</reference>
<reference key="4">
    <citation type="journal article" date="2008" name="BMC Plant Biol.">
        <title>A new picture of cell wall protein dynamics in elongating cells of Arabidopsis thaliana: confirmed actors and newcomers.</title>
        <authorList>
            <person name="Irshad M."/>
            <person name="Canut H."/>
            <person name="Borderies G."/>
            <person name="Pont-Lezica R."/>
            <person name="Jamet E."/>
        </authorList>
    </citation>
    <scope>SUBCELLULAR LOCATION</scope>
    <scope>TISSUE SPECIFICITY</scope>
</reference>
<reference key="5">
    <citation type="journal article" date="2015" name="J. Biol. Chem.">
        <title>Oxidation of monolignols by members of the berberine bridge enzyme family suggests a role in plant cell wall metabolism.</title>
        <authorList>
            <person name="Daniel B."/>
            <person name="Pavkov-Keller T."/>
            <person name="Steiner B."/>
            <person name="Dordic A."/>
            <person name="Gutmann A."/>
            <person name="Nidetzky B."/>
            <person name="Sensen C.W."/>
            <person name="van der Graaff E."/>
            <person name="Wallner S."/>
            <person name="Gruber K."/>
            <person name="Macheroux P."/>
        </authorList>
    </citation>
    <scope>GENE FAMILY</scope>
    <scope>NOMENCLATURE</scope>
</reference>
<name>BBE9_ARATH</name>
<comment type="cofactor">
    <cofactor evidence="1">
        <name>FAD</name>
        <dbReference type="ChEBI" id="CHEBI:57692"/>
    </cofactor>
    <text evidence="1">Binds 1 FAD per subunit in a bicovalent manner.</text>
</comment>
<comment type="subcellular location">
    <subcellularLocation>
        <location evidence="5">Secreted</location>
        <location evidence="5">Cell wall</location>
    </subcellularLocation>
</comment>
<comment type="tissue specificity">
    <text evidence="5">Accumulates in cell walls of etiolated hypocotyls.</text>
</comment>
<comment type="PTM">
    <text evidence="1">The FAD cofactor is bound via a bicovalent 6-S-cysteinyl, 8alpha-N1-histidyl FAD linkage.</text>
</comment>
<comment type="similarity">
    <text evidence="7">Belongs to the oxygen-dependent FAD-linked oxidoreductase family.</text>
</comment>
<proteinExistence type="evidence at transcript level"/>
<feature type="signal peptide" evidence="2">
    <location>
        <begin position="1"/>
        <end position="23"/>
    </location>
</feature>
<feature type="chain" id="PRO_5008180359" description="Berberine bridge enzyme-like 9">
    <location>
        <begin position="24"/>
        <end position="531"/>
    </location>
</feature>
<feature type="domain" description="FAD-binding PCMH-type" evidence="4">
    <location>
        <begin position="77"/>
        <end position="252"/>
    </location>
</feature>
<feature type="glycosylation site" description="N-linked (GlcNAc...) asparagine" evidence="3">
    <location>
        <position position="76"/>
    </location>
</feature>
<feature type="glycosylation site" description="N-linked (GlcNAc...) asparagine" evidence="3">
    <location>
        <position position="164"/>
    </location>
</feature>
<feature type="glycosylation site" description="N-linked (GlcNAc...) asparagine" evidence="3">
    <location>
        <position position="271"/>
    </location>
</feature>
<feature type="glycosylation site" description="N-linked (GlcNAc...) asparagine" evidence="3">
    <location>
        <position position="300"/>
    </location>
</feature>
<feature type="glycosylation site" description="N-linked (GlcNAc...) asparagine" evidence="3">
    <location>
        <position position="314"/>
    </location>
</feature>
<feature type="glycosylation site" description="N-linked (GlcNAc...) asparagine" evidence="3">
    <location>
        <position position="400"/>
    </location>
</feature>
<feature type="glycosylation site" description="N-linked (GlcNAc...) asparagine" evidence="3">
    <location>
        <position position="485"/>
    </location>
</feature>
<feature type="disulfide bond" evidence="1">
    <location>
        <begin position="35"/>
        <end position="99"/>
    </location>
</feature>
<feature type="cross-link" description="6-(S-cysteinyl)-8alpha-(pros-histidyl)-FAD (His-Cys)" evidence="1">
    <location>
        <begin position="114"/>
        <end position="177"/>
    </location>
</feature>
<protein>
    <recommendedName>
        <fullName evidence="6">Berberine bridge enzyme-like 9</fullName>
        <shortName evidence="6">AtBBE-like 9</shortName>
        <ecNumber evidence="1">1.1.1.-</ecNumber>
    </recommendedName>
</protein>